<protein>
    <recommendedName>
        <fullName evidence="1">Transcriptional repressor NrdR</fullName>
    </recommendedName>
</protein>
<keyword id="KW-0067">ATP-binding</keyword>
<keyword id="KW-0238">DNA-binding</keyword>
<keyword id="KW-0479">Metal-binding</keyword>
<keyword id="KW-0547">Nucleotide-binding</keyword>
<keyword id="KW-0678">Repressor</keyword>
<keyword id="KW-0804">Transcription</keyword>
<keyword id="KW-0805">Transcription regulation</keyword>
<keyword id="KW-0862">Zinc</keyword>
<keyword id="KW-0863">Zinc-finger</keyword>
<proteinExistence type="inferred from homology"/>
<organism>
    <name type="scientific">Histophilus somni (strain 129Pt)</name>
    <name type="common">Haemophilus somnus</name>
    <dbReference type="NCBI Taxonomy" id="205914"/>
    <lineage>
        <taxon>Bacteria</taxon>
        <taxon>Pseudomonadati</taxon>
        <taxon>Pseudomonadota</taxon>
        <taxon>Gammaproteobacteria</taxon>
        <taxon>Pasteurellales</taxon>
        <taxon>Pasteurellaceae</taxon>
        <taxon>Histophilus</taxon>
    </lineage>
</organism>
<accession>Q0I495</accession>
<reference key="1">
    <citation type="journal article" date="2007" name="J. Bacteriol.">
        <title>Complete genome sequence of Haemophilus somnus (Histophilus somni) strain 129Pt and comparison to Haemophilus ducreyi 35000HP and Haemophilus influenzae Rd.</title>
        <authorList>
            <person name="Challacombe J.F."/>
            <person name="Duncan A.J."/>
            <person name="Brettin T.S."/>
            <person name="Bruce D."/>
            <person name="Chertkov O."/>
            <person name="Detter J.C."/>
            <person name="Han C.S."/>
            <person name="Misra M."/>
            <person name="Richardson P."/>
            <person name="Tapia R."/>
            <person name="Thayer N."/>
            <person name="Xie G."/>
            <person name="Inzana T.J."/>
        </authorList>
    </citation>
    <scope>NUCLEOTIDE SEQUENCE [LARGE SCALE GENOMIC DNA]</scope>
    <source>
        <strain>129Pt</strain>
    </source>
</reference>
<feature type="chain" id="PRO_0000264179" description="Transcriptional repressor NrdR">
    <location>
        <begin position="1"/>
        <end position="149"/>
    </location>
</feature>
<feature type="domain" description="ATP-cone" evidence="1">
    <location>
        <begin position="49"/>
        <end position="139"/>
    </location>
</feature>
<feature type="zinc finger region" evidence="1">
    <location>
        <begin position="3"/>
        <end position="34"/>
    </location>
</feature>
<gene>
    <name evidence="1" type="primary">nrdR</name>
    <name type="ordered locus">HS_1051</name>
</gene>
<dbReference type="EMBL" id="CP000436">
    <property type="protein sequence ID" value="ABI25326.1"/>
    <property type="molecule type" value="Genomic_DNA"/>
</dbReference>
<dbReference type="SMR" id="Q0I495"/>
<dbReference type="KEGG" id="hso:HS_1051"/>
<dbReference type="eggNOG" id="COG1327">
    <property type="taxonomic scope" value="Bacteria"/>
</dbReference>
<dbReference type="HOGENOM" id="CLU_108412_0_0_6"/>
<dbReference type="GO" id="GO:0005524">
    <property type="term" value="F:ATP binding"/>
    <property type="evidence" value="ECO:0007669"/>
    <property type="project" value="UniProtKB-KW"/>
</dbReference>
<dbReference type="GO" id="GO:0003677">
    <property type="term" value="F:DNA binding"/>
    <property type="evidence" value="ECO:0007669"/>
    <property type="project" value="UniProtKB-KW"/>
</dbReference>
<dbReference type="GO" id="GO:0008270">
    <property type="term" value="F:zinc ion binding"/>
    <property type="evidence" value="ECO:0007669"/>
    <property type="project" value="UniProtKB-UniRule"/>
</dbReference>
<dbReference type="GO" id="GO:0045892">
    <property type="term" value="P:negative regulation of DNA-templated transcription"/>
    <property type="evidence" value="ECO:0007669"/>
    <property type="project" value="UniProtKB-UniRule"/>
</dbReference>
<dbReference type="HAMAP" id="MF_00440">
    <property type="entry name" value="NrdR"/>
    <property type="match status" value="1"/>
</dbReference>
<dbReference type="InterPro" id="IPR005144">
    <property type="entry name" value="ATP-cone_dom"/>
</dbReference>
<dbReference type="InterPro" id="IPR055173">
    <property type="entry name" value="NrdR-like_N"/>
</dbReference>
<dbReference type="InterPro" id="IPR003796">
    <property type="entry name" value="RNR_NrdR-like"/>
</dbReference>
<dbReference type="NCBIfam" id="TIGR00244">
    <property type="entry name" value="transcriptional regulator NrdR"/>
    <property type="match status" value="1"/>
</dbReference>
<dbReference type="PANTHER" id="PTHR30455">
    <property type="entry name" value="TRANSCRIPTIONAL REPRESSOR NRDR"/>
    <property type="match status" value="1"/>
</dbReference>
<dbReference type="PANTHER" id="PTHR30455:SF2">
    <property type="entry name" value="TRANSCRIPTIONAL REPRESSOR NRDR"/>
    <property type="match status" value="1"/>
</dbReference>
<dbReference type="Pfam" id="PF03477">
    <property type="entry name" value="ATP-cone"/>
    <property type="match status" value="1"/>
</dbReference>
<dbReference type="Pfam" id="PF22811">
    <property type="entry name" value="Zn_ribbon_NrdR"/>
    <property type="match status" value="1"/>
</dbReference>
<dbReference type="PROSITE" id="PS51161">
    <property type="entry name" value="ATP_CONE"/>
    <property type="match status" value="1"/>
</dbReference>
<evidence type="ECO:0000255" key="1">
    <source>
        <dbReference type="HAMAP-Rule" id="MF_00440"/>
    </source>
</evidence>
<name>NRDR_HISS1</name>
<sequence length="149" mass="17398">MRCPFCAMEETKVIDSRLVSDGYQVRRRRECGYCHERFTTFESAEVIVPKIIKNDGSREPFDEDKLRRGIQHALEKRPVSSDDVEKAISRIIYQLRATGERDVKSQDVGRLVMAELKELDKVAYIRFASVYLSFDDINQFTNEIEKLKD</sequence>
<comment type="function">
    <text evidence="1">Negatively regulates transcription of bacterial ribonucleotide reductase nrd genes and operons by binding to NrdR-boxes.</text>
</comment>
<comment type="cofactor">
    <cofactor evidence="1">
        <name>Zn(2+)</name>
        <dbReference type="ChEBI" id="CHEBI:29105"/>
    </cofactor>
    <text evidence="1">Binds 1 zinc ion.</text>
</comment>
<comment type="similarity">
    <text evidence="1">Belongs to the NrdR family.</text>
</comment>